<protein>
    <recommendedName>
        <fullName evidence="1">Prokaryotic ubiquitin-like protein Pup 2</fullName>
    </recommendedName>
    <alternativeName>
        <fullName evidence="1">Bacterial ubiquitin-like modifier 2</fullName>
    </alternativeName>
</protein>
<keyword id="KW-0175">Coiled coil</keyword>
<keyword id="KW-1017">Isopeptide bond</keyword>
<keyword id="KW-0833">Ubl conjugation pathway</keyword>
<comment type="function">
    <text evidence="1">Protein modifier that is covalently attached to lysine residues of substrate proteins, thereby targeting them for proteasomal degradation. The tagging system is termed pupylation.</text>
</comment>
<comment type="pathway">
    <text evidence="1">Protein degradation; proteasomal Pup-dependent pathway.</text>
</comment>
<comment type="subunit">
    <text evidence="1">Strongly interacts with the proteasome-associated ATPase ARC through a hydrophobic interface; the interacting region of Pup lies in its C-terminal half. There is one Pup binding site per ARC hexamer ring.</text>
</comment>
<comment type="domain">
    <text evidence="1">The N-terminal unstructured half of Pup provides a signal required to initiate unfolding and degradation by the proteasome but is not needed for pupylation, while the C-terminal helical half of Pup interacts with ARC to target proteins to the proteasome.</text>
</comment>
<comment type="PTM">
    <text evidence="1">Is modified by deamidation of its C-terminal glutamine to glutamate by the deamidase Dop, a prerequisite to the subsequent pupylation process.</text>
</comment>
<comment type="similarity">
    <text evidence="1">Belongs to the prokaryotic ubiquitin-like protein family.</text>
</comment>
<evidence type="ECO:0000255" key="1">
    <source>
        <dbReference type="HAMAP-Rule" id="MF_02106"/>
    </source>
</evidence>
<evidence type="ECO:0000256" key="2">
    <source>
        <dbReference type="SAM" id="MobiDB-lite"/>
    </source>
</evidence>
<reference key="1">
    <citation type="journal article" date="1995" name="Curr. Biol.">
        <title>The first characterization of a eubacterial proteasome: the 20S complex of Rhodococcus.</title>
        <authorList>
            <person name="Tamura T."/>
            <person name="Nagy I."/>
            <person name="Lupas A."/>
            <person name="Lottspeich F."/>
            <person name="Cejka Z."/>
            <person name="Schoofs G."/>
            <person name="Tanaka K."/>
            <person name="de Mot R."/>
            <person name="Baumeister W."/>
        </authorList>
    </citation>
    <scope>NUCLEOTIDE SEQUENCE [GENOMIC DNA]</scope>
    <source>
        <strain>NI86/21</strain>
    </source>
</reference>
<feature type="chain" id="PRO_0000390605" description="Prokaryotic ubiquitin-like protein Pup 2">
    <location>
        <begin position="1"/>
        <end position="64"/>
    </location>
</feature>
<feature type="region of interest" description="Disordered" evidence="2">
    <location>
        <begin position="1"/>
        <end position="37"/>
    </location>
</feature>
<feature type="region of interest" description="ARC ATPase binding" evidence="1">
    <location>
        <begin position="21"/>
        <end position="58"/>
    </location>
</feature>
<feature type="coiled-coil region" evidence="1">
    <location>
        <begin position="24"/>
        <end position="52"/>
    </location>
</feature>
<feature type="modified residue" description="Deamidated glutamine" evidence="1">
    <location>
        <position position="64"/>
    </location>
</feature>
<feature type="cross-link" description="Isoglutamyl lysine isopeptide (Gln-Lys) (interchain with K-? in acceptor proteins)" evidence="1">
    <location>
        <position position="64"/>
    </location>
</feature>
<name>PUP2_RHOER</name>
<gene>
    <name evidence="1" type="primary">pup2</name>
    <name type="ORF">ORF7-2</name>
</gene>
<proteinExistence type="inferred from homology"/>
<accession>Q53082</accession>
<organism>
    <name type="scientific">Rhodococcus erythropolis</name>
    <name type="common">Arthrobacter picolinophilus</name>
    <dbReference type="NCBI Taxonomy" id="1833"/>
    <lineage>
        <taxon>Bacteria</taxon>
        <taxon>Bacillati</taxon>
        <taxon>Actinomycetota</taxon>
        <taxon>Actinomycetes</taxon>
        <taxon>Mycobacteriales</taxon>
        <taxon>Nocardiaceae</taxon>
        <taxon>Rhodococcus</taxon>
        <taxon>Rhodococcus erythropolis group</taxon>
    </lineage>
</organism>
<dbReference type="EMBL" id="U26422">
    <property type="protein sequence ID" value="AAC45735.1"/>
    <property type="molecule type" value="Genomic_DNA"/>
</dbReference>
<dbReference type="RefSeq" id="WP_003944925.1">
    <property type="nucleotide sequence ID" value="NZ_WIDN01000105.1"/>
</dbReference>
<dbReference type="SMR" id="Q53082"/>
<dbReference type="STRING" id="1833.XU06_14805"/>
<dbReference type="OMA" id="MAQDQVK"/>
<dbReference type="UniPathway" id="UPA00997"/>
<dbReference type="GO" id="GO:0070628">
    <property type="term" value="F:proteasome binding"/>
    <property type="evidence" value="ECO:0007669"/>
    <property type="project" value="UniProtKB-UniRule"/>
</dbReference>
<dbReference type="GO" id="GO:0031386">
    <property type="term" value="F:protein tag activity"/>
    <property type="evidence" value="ECO:0007669"/>
    <property type="project" value="UniProtKB-UniRule"/>
</dbReference>
<dbReference type="GO" id="GO:0019941">
    <property type="term" value="P:modification-dependent protein catabolic process"/>
    <property type="evidence" value="ECO:0007669"/>
    <property type="project" value="UniProtKB-UniRule"/>
</dbReference>
<dbReference type="GO" id="GO:0010498">
    <property type="term" value="P:proteasomal protein catabolic process"/>
    <property type="evidence" value="ECO:0007669"/>
    <property type="project" value="UniProtKB-UniRule"/>
</dbReference>
<dbReference type="GO" id="GO:0070490">
    <property type="term" value="P:protein pupylation"/>
    <property type="evidence" value="ECO:0007669"/>
    <property type="project" value="UniProtKB-UniRule"/>
</dbReference>
<dbReference type="HAMAP" id="MF_02106">
    <property type="entry name" value="Pup"/>
    <property type="match status" value="1"/>
</dbReference>
<dbReference type="InterPro" id="IPR008515">
    <property type="entry name" value="Ubiquitin-like_Pup"/>
</dbReference>
<dbReference type="NCBIfam" id="TIGR03687">
    <property type="entry name" value="pupylate_cterm"/>
    <property type="match status" value="1"/>
</dbReference>
<dbReference type="Pfam" id="PF05639">
    <property type="entry name" value="Pup"/>
    <property type="match status" value="1"/>
</dbReference>
<sequence>MAQEQTQRAGGGEDDETTGGDGSAGQERREKLAAETDDLLDEIDDVLEENAEDFVRAYVQKGGQ</sequence>